<gene>
    <name evidence="1" type="primary">leuS</name>
    <name type="ordered locus">SYNPCC7002_A1694</name>
</gene>
<evidence type="ECO:0000255" key="1">
    <source>
        <dbReference type="HAMAP-Rule" id="MF_00049"/>
    </source>
</evidence>
<evidence type="ECO:0000256" key="2">
    <source>
        <dbReference type="SAM" id="MobiDB-lite"/>
    </source>
</evidence>
<keyword id="KW-0030">Aminoacyl-tRNA synthetase</keyword>
<keyword id="KW-0067">ATP-binding</keyword>
<keyword id="KW-0963">Cytoplasm</keyword>
<keyword id="KW-0436">Ligase</keyword>
<keyword id="KW-0547">Nucleotide-binding</keyword>
<keyword id="KW-0648">Protein biosynthesis</keyword>
<keyword id="KW-1185">Reference proteome</keyword>
<accession>B1XP90</accession>
<dbReference type="EC" id="6.1.1.4" evidence="1"/>
<dbReference type="EMBL" id="CP000951">
    <property type="protein sequence ID" value="ACA99683.1"/>
    <property type="molecule type" value="Genomic_DNA"/>
</dbReference>
<dbReference type="RefSeq" id="WP_012307306.1">
    <property type="nucleotide sequence ID" value="NZ_JAHHPU010000002.1"/>
</dbReference>
<dbReference type="SMR" id="B1XP90"/>
<dbReference type="STRING" id="32049.SYNPCC7002_A1694"/>
<dbReference type="KEGG" id="syp:SYNPCC7002_A1694"/>
<dbReference type="eggNOG" id="COG0495">
    <property type="taxonomic scope" value="Bacteria"/>
</dbReference>
<dbReference type="HOGENOM" id="CLU_004427_0_0_3"/>
<dbReference type="Proteomes" id="UP000001688">
    <property type="component" value="Chromosome"/>
</dbReference>
<dbReference type="GO" id="GO:0005829">
    <property type="term" value="C:cytosol"/>
    <property type="evidence" value="ECO:0007669"/>
    <property type="project" value="TreeGrafter"/>
</dbReference>
<dbReference type="GO" id="GO:0002161">
    <property type="term" value="F:aminoacyl-tRNA deacylase activity"/>
    <property type="evidence" value="ECO:0007669"/>
    <property type="project" value="InterPro"/>
</dbReference>
<dbReference type="GO" id="GO:0005524">
    <property type="term" value="F:ATP binding"/>
    <property type="evidence" value="ECO:0007669"/>
    <property type="project" value="UniProtKB-UniRule"/>
</dbReference>
<dbReference type="GO" id="GO:0004823">
    <property type="term" value="F:leucine-tRNA ligase activity"/>
    <property type="evidence" value="ECO:0007669"/>
    <property type="project" value="UniProtKB-UniRule"/>
</dbReference>
<dbReference type="GO" id="GO:0006429">
    <property type="term" value="P:leucyl-tRNA aminoacylation"/>
    <property type="evidence" value="ECO:0007669"/>
    <property type="project" value="UniProtKB-UniRule"/>
</dbReference>
<dbReference type="CDD" id="cd07958">
    <property type="entry name" value="Anticodon_Ia_Leu_BEm"/>
    <property type="match status" value="1"/>
</dbReference>
<dbReference type="CDD" id="cd00812">
    <property type="entry name" value="LeuRS_core"/>
    <property type="match status" value="1"/>
</dbReference>
<dbReference type="FunFam" id="3.40.50.620:FF:000003">
    <property type="entry name" value="Leucine--tRNA ligase"/>
    <property type="match status" value="1"/>
</dbReference>
<dbReference type="FunFam" id="1.10.730.10:FF:000011">
    <property type="entry name" value="Leucine--tRNA ligase chloroplastic/mitochondrial"/>
    <property type="match status" value="1"/>
</dbReference>
<dbReference type="FunFam" id="3.40.50.620:FF:000100">
    <property type="entry name" value="probable leucine--tRNA ligase, mitochondrial"/>
    <property type="match status" value="1"/>
</dbReference>
<dbReference type="Gene3D" id="3.40.50.620">
    <property type="entry name" value="HUPs"/>
    <property type="match status" value="2"/>
</dbReference>
<dbReference type="Gene3D" id="1.10.730.10">
    <property type="entry name" value="Isoleucyl-tRNA Synthetase, Domain 1"/>
    <property type="match status" value="1"/>
</dbReference>
<dbReference type="HAMAP" id="MF_00049_B">
    <property type="entry name" value="Leu_tRNA_synth_B"/>
    <property type="match status" value="1"/>
</dbReference>
<dbReference type="InterPro" id="IPR001412">
    <property type="entry name" value="aa-tRNA-synth_I_CS"/>
</dbReference>
<dbReference type="InterPro" id="IPR002300">
    <property type="entry name" value="aa-tRNA-synth_Ia"/>
</dbReference>
<dbReference type="InterPro" id="IPR002302">
    <property type="entry name" value="Leu-tRNA-ligase"/>
</dbReference>
<dbReference type="InterPro" id="IPR025709">
    <property type="entry name" value="Leu_tRNA-synth_edit"/>
</dbReference>
<dbReference type="InterPro" id="IPR013155">
    <property type="entry name" value="M/V/L/I-tRNA-synth_anticd-bd"/>
</dbReference>
<dbReference type="InterPro" id="IPR015413">
    <property type="entry name" value="Methionyl/Leucyl_tRNA_Synth"/>
</dbReference>
<dbReference type="InterPro" id="IPR014729">
    <property type="entry name" value="Rossmann-like_a/b/a_fold"/>
</dbReference>
<dbReference type="InterPro" id="IPR009080">
    <property type="entry name" value="tRNAsynth_Ia_anticodon-bd"/>
</dbReference>
<dbReference type="InterPro" id="IPR009008">
    <property type="entry name" value="Val/Leu/Ile-tRNA-synth_edit"/>
</dbReference>
<dbReference type="NCBIfam" id="TIGR00396">
    <property type="entry name" value="leuS_bact"/>
    <property type="match status" value="1"/>
</dbReference>
<dbReference type="PANTHER" id="PTHR43740:SF2">
    <property type="entry name" value="LEUCINE--TRNA LIGASE, MITOCHONDRIAL"/>
    <property type="match status" value="1"/>
</dbReference>
<dbReference type="PANTHER" id="PTHR43740">
    <property type="entry name" value="LEUCYL-TRNA SYNTHETASE"/>
    <property type="match status" value="1"/>
</dbReference>
<dbReference type="Pfam" id="PF08264">
    <property type="entry name" value="Anticodon_1"/>
    <property type="match status" value="1"/>
</dbReference>
<dbReference type="Pfam" id="PF00133">
    <property type="entry name" value="tRNA-synt_1"/>
    <property type="match status" value="2"/>
</dbReference>
<dbReference type="Pfam" id="PF13603">
    <property type="entry name" value="tRNA-synt_1_2"/>
    <property type="match status" value="1"/>
</dbReference>
<dbReference type="Pfam" id="PF09334">
    <property type="entry name" value="tRNA-synt_1g"/>
    <property type="match status" value="1"/>
</dbReference>
<dbReference type="PRINTS" id="PR00985">
    <property type="entry name" value="TRNASYNTHLEU"/>
</dbReference>
<dbReference type="SUPFAM" id="SSF47323">
    <property type="entry name" value="Anticodon-binding domain of a subclass of class I aminoacyl-tRNA synthetases"/>
    <property type="match status" value="1"/>
</dbReference>
<dbReference type="SUPFAM" id="SSF52374">
    <property type="entry name" value="Nucleotidylyl transferase"/>
    <property type="match status" value="1"/>
</dbReference>
<dbReference type="SUPFAM" id="SSF50677">
    <property type="entry name" value="ValRS/IleRS/LeuRS editing domain"/>
    <property type="match status" value="1"/>
</dbReference>
<dbReference type="PROSITE" id="PS00178">
    <property type="entry name" value="AA_TRNA_LIGASE_I"/>
    <property type="match status" value="1"/>
</dbReference>
<name>SYL_PICP2</name>
<comment type="catalytic activity">
    <reaction evidence="1">
        <text>tRNA(Leu) + L-leucine + ATP = L-leucyl-tRNA(Leu) + AMP + diphosphate</text>
        <dbReference type="Rhea" id="RHEA:11688"/>
        <dbReference type="Rhea" id="RHEA-COMP:9613"/>
        <dbReference type="Rhea" id="RHEA-COMP:9622"/>
        <dbReference type="ChEBI" id="CHEBI:30616"/>
        <dbReference type="ChEBI" id="CHEBI:33019"/>
        <dbReference type="ChEBI" id="CHEBI:57427"/>
        <dbReference type="ChEBI" id="CHEBI:78442"/>
        <dbReference type="ChEBI" id="CHEBI:78494"/>
        <dbReference type="ChEBI" id="CHEBI:456215"/>
        <dbReference type="EC" id="6.1.1.4"/>
    </reaction>
</comment>
<comment type="subcellular location">
    <subcellularLocation>
        <location evidence="1">Cytoplasm</location>
    </subcellularLocation>
</comment>
<comment type="similarity">
    <text evidence="1">Belongs to the class-I aminoacyl-tRNA synthetase family.</text>
</comment>
<organism>
    <name type="scientific">Picosynechococcus sp. (strain ATCC 27264 / PCC 7002 / PR-6)</name>
    <name type="common">Agmenellum quadruplicatum</name>
    <dbReference type="NCBI Taxonomy" id="32049"/>
    <lineage>
        <taxon>Bacteria</taxon>
        <taxon>Bacillati</taxon>
        <taxon>Cyanobacteriota</taxon>
        <taxon>Cyanophyceae</taxon>
        <taxon>Oscillatoriophycideae</taxon>
        <taxon>Chroococcales</taxon>
        <taxon>Geminocystaceae</taxon>
        <taxon>Picosynechococcus</taxon>
    </lineage>
</organism>
<protein>
    <recommendedName>
        <fullName evidence="1">Leucine--tRNA ligase</fullName>
        <ecNumber evidence="1">6.1.1.4</ecNumber>
    </recommendedName>
    <alternativeName>
        <fullName evidence="1">Leucyl-tRNA synthetase</fullName>
        <shortName evidence="1">LeuRS</shortName>
    </alternativeName>
</protein>
<reference key="1">
    <citation type="submission" date="2008-02" db="EMBL/GenBank/DDBJ databases">
        <title>Complete sequence of Synechococcus sp. PCC 7002.</title>
        <authorList>
            <person name="Li T."/>
            <person name="Zhao J."/>
            <person name="Zhao C."/>
            <person name="Liu Z."/>
            <person name="Zhao F."/>
            <person name="Marquardt J."/>
            <person name="Nomura C.T."/>
            <person name="Persson S."/>
            <person name="Detter J.C."/>
            <person name="Richardson P.M."/>
            <person name="Lanz C."/>
            <person name="Schuster S.C."/>
            <person name="Wang J."/>
            <person name="Li S."/>
            <person name="Huang X."/>
            <person name="Cai T."/>
            <person name="Yu Z."/>
            <person name="Luo J."/>
            <person name="Zhao J."/>
            <person name="Bryant D.A."/>
        </authorList>
    </citation>
    <scope>NUCLEOTIDE SEQUENCE [LARGE SCALE GENOMIC DNA]</scope>
    <source>
        <strain>ATCC 27264 / PCC 7002 / PR-6</strain>
    </source>
</reference>
<feature type="chain" id="PRO_1000091374" description="Leucine--tRNA ligase">
    <location>
        <begin position="1"/>
        <end position="852"/>
    </location>
</feature>
<feature type="region of interest" description="Disordered" evidence="2">
    <location>
        <begin position="586"/>
        <end position="606"/>
    </location>
</feature>
<feature type="short sequence motif" description="'HIGH' region">
    <location>
        <begin position="42"/>
        <end position="52"/>
    </location>
</feature>
<feature type="short sequence motif" description="'KMSKS' region">
    <location>
        <begin position="614"/>
        <end position="618"/>
    </location>
</feature>
<feature type="binding site" evidence="1">
    <location>
        <position position="617"/>
    </location>
    <ligand>
        <name>ATP</name>
        <dbReference type="ChEBI" id="CHEBI:30616"/>
    </ligand>
</feature>
<proteinExistence type="inferred from homology"/>
<sequence length="852" mass="95642">METRYSAADIEAKWQQQWLELGLDKTPSQSDKPKFYALSMFPYPSGKLHMGHVRNYVITDVIARYKRMQGYRVLHPMGWDAFGLPAENAAIDRGIPPAKWTYQNIAQMREQLKQLGLSIDWDREVATCSPDYYKWTQWLFLQFYKAGLAYQKEAAVNWDPIDQTVLANEQVDAEGRSWRSGAIVEKKLLRQWFLKITDYAEELLQDLNTLDGWPERVKLMQENWIGKSTGAHLEFPVVGSDEKVAVFTTRLDTVFGVTYVVLAPEHPLVAQVTTPAQKAAVDAFIAEVSQESEQDRTADDKPKKGVATGGMVTNPFTGEEVPILIANYVLYEYGTGAVMGVPAHDSRDCKFAKENNLPIKMVIIPEGGDATAVLTEAYTEAGIMVNSGQFDGLVSTEGKKAIAKFAAENGFGREQIQYRLRDWLISRQRYWGCPIPMIYCDDCGVVPVPDSDLPVVLPEDVEFSARGGSPLAQMADWQAVDCPCCGKAARRETDTMDTFIDSSWYFLRYTDANNTEKPFALDPVNDWMAVDQYVGGIEHAILHLLYSRFFTKVVRDRQLVSVDEPFKRLLTQGMVQALTYKNPRTNKYVPADQVDPNDPKDPETGEPLTGFYEKMSKSKYNGVDPALVLDKYGADTARMFILFKAPPEKDLEWDDADVEGQFRFLNRIWNLVAGYEAAETSVKATGELSKAEKDLRRAVHTAIKEIQEDLEGDYQFNTAIAELMKLNNAIKDVKCVDSPVYKEAIETLILLLAPFAPHIADELWSNLGHSESIHTVPFPQLDETALTVDEITIVIQILGKTRGTIQVPAGISKADLEKTATASDIAQRYIAGKEIKKVIVVPNKLVNFVIPK</sequence>